<comment type="function">
    <text evidence="1">Specifically methylates the guanine in position 2445 (m2G2445) and the guanine in position 2069 (m7G2069) of 23S rRNA.</text>
</comment>
<comment type="catalytic activity">
    <reaction evidence="1">
        <text>guanosine(2445) in 23S rRNA + S-adenosyl-L-methionine = N(2)-methylguanosine(2445) in 23S rRNA + S-adenosyl-L-homocysteine + H(+)</text>
        <dbReference type="Rhea" id="RHEA:42740"/>
        <dbReference type="Rhea" id="RHEA-COMP:10215"/>
        <dbReference type="Rhea" id="RHEA-COMP:10216"/>
        <dbReference type="ChEBI" id="CHEBI:15378"/>
        <dbReference type="ChEBI" id="CHEBI:57856"/>
        <dbReference type="ChEBI" id="CHEBI:59789"/>
        <dbReference type="ChEBI" id="CHEBI:74269"/>
        <dbReference type="ChEBI" id="CHEBI:74481"/>
        <dbReference type="EC" id="2.1.1.173"/>
    </reaction>
</comment>
<comment type="catalytic activity">
    <reaction evidence="1">
        <text>guanosine(2069) in 23S rRNA + S-adenosyl-L-methionine = N(2)-methylguanosine(2069) in 23S rRNA + S-adenosyl-L-homocysteine + H(+)</text>
        <dbReference type="Rhea" id="RHEA:43772"/>
        <dbReference type="Rhea" id="RHEA-COMP:10688"/>
        <dbReference type="Rhea" id="RHEA-COMP:10689"/>
        <dbReference type="ChEBI" id="CHEBI:15378"/>
        <dbReference type="ChEBI" id="CHEBI:57856"/>
        <dbReference type="ChEBI" id="CHEBI:59789"/>
        <dbReference type="ChEBI" id="CHEBI:74269"/>
        <dbReference type="ChEBI" id="CHEBI:74481"/>
        <dbReference type="EC" id="2.1.1.264"/>
    </reaction>
</comment>
<comment type="subcellular location">
    <subcellularLocation>
        <location evidence="1">Cytoplasm</location>
    </subcellularLocation>
</comment>
<comment type="similarity">
    <text evidence="1">Belongs to the methyltransferase superfamily. RlmKL family.</text>
</comment>
<sequence>MNQYLAVTSNGMENLLVEELTKLGIENAKPVQAGVKFKATNEQIYRCCLWSRLASRFVRVLSEFTCNDDMDLYLSTSSINWVNQFHSSKRFVVDFNGTNREIRNSQYGAMKVKDGIVDCFEKKGLPRPNISKERPDIRVHVRLHKDKAILGVDMVGSGLHQRGYRPESGRAPLRETLAAAIIMRCGWDGHQPLLDPMCGSGTLLIEAAMMAANMAPGVKRKQWCFESLEDFEPDTWAEIKSEANVQARRGVKKVDAKFFGFDNDPKVLKVAQENARRAGVEELIEFAQGDVATITRLSGFENGVIVSNPPYGERLGTEPGLIALYTAFGGQLKAEFGGCKASIFSSSDELLSCLRMRADKQFKLNNGALPCHQKNYSIAERSADEVKGADTNTQIAPDFSNRLKKNIGKIGKWARKEKLDCYRIYDADLPEYNVAIDVYGDQIVIQEYAAPKNIPEEKAKRRLTDIIRATIQVTGVEANKVVLKVREKQKGRSQYQKLGQVSETLEVNEYGVKLIVNLHDYLDTGLFLDHKITRRRLGEMAQGKDFLNLFAYTGSATVHAAVGGARSTTTVDMSNTYLNWAKDNMQLNGCIGRQHRFEQADCLQWLENAKGEYDLIFIDPPTFSNSKRMETSFDVQRDHIKLMTNLKRLLRAGGTIVFSNNKRHFKMDEEGLAELGLKAQNISSQTLPLDFSRNKHIHNCWLVTHAE</sequence>
<accession>Q87PC0</accession>
<gene>
    <name evidence="1" type="primary">rlmL</name>
    <name type="ordered locus">VP1597</name>
</gene>
<organism>
    <name type="scientific">Vibrio parahaemolyticus serotype O3:K6 (strain RIMD 2210633)</name>
    <dbReference type="NCBI Taxonomy" id="223926"/>
    <lineage>
        <taxon>Bacteria</taxon>
        <taxon>Pseudomonadati</taxon>
        <taxon>Pseudomonadota</taxon>
        <taxon>Gammaproteobacteria</taxon>
        <taxon>Vibrionales</taxon>
        <taxon>Vibrionaceae</taxon>
        <taxon>Vibrio</taxon>
    </lineage>
</organism>
<dbReference type="EC" id="2.1.1.173" evidence="1"/>
<dbReference type="EC" id="2.1.1.264" evidence="1"/>
<dbReference type="EMBL" id="BA000031">
    <property type="protein sequence ID" value="BAC59860.1"/>
    <property type="molecule type" value="Genomic_DNA"/>
</dbReference>
<dbReference type="RefSeq" id="NP_797976.1">
    <property type="nucleotide sequence ID" value="NC_004603.1"/>
</dbReference>
<dbReference type="SMR" id="Q87PC0"/>
<dbReference type="GeneID" id="1189104"/>
<dbReference type="KEGG" id="vpa:VP1597"/>
<dbReference type="PATRIC" id="fig|223926.6.peg.1522"/>
<dbReference type="eggNOG" id="COG0116">
    <property type="taxonomic scope" value="Bacteria"/>
</dbReference>
<dbReference type="eggNOG" id="COG1092">
    <property type="taxonomic scope" value="Bacteria"/>
</dbReference>
<dbReference type="HOGENOM" id="CLU_014042_2_0_6"/>
<dbReference type="Proteomes" id="UP000002493">
    <property type="component" value="Chromosome 1"/>
</dbReference>
<dbReference type="GO" id="GO:0005737">
    <property type="term" value="C:cytoplasm"/>
    <property type="evidence" value="ECO:0007669"/>
    <property type="project" value="UniProtKB-SubCell"/>
</dbReference>
<dbReference type="GO" id="GO:0052915">
    <property type="term" value="F:23S rRNA (guanine(2445)-N(2))-methyltransferase activity"/>
    <property type="evidence" value="ECO:0007669"/>
    <property type="project" value="UniProtKB-UniRule"/>
</dbReference>
<dbReference type="GO" id="GO:0003723">
    <property type="term" value="F:RNA binding"/>
    <property type="evidence" value="ECO:0007669"/>
    <property type="project" value="UniProtKB-KW"/>
</dbReference>
<dbReference type="GO" id="GO:0070043">
    <property type="term" value="F:rRNA (guanine-N7-)-methyltransferase activity"/>
    <property type="evidence" value="ECO:0007669"/>
    <property type="project" value="UniProtKB-UniRule"/>
</dbReference>
<dbReference type="CDD" id="cd02440">
    <property type="entry name" value="AdoMet_MTases"/>
    <property type="match status" value="1"/>
</dbReference>
<dbReference type="CDD" id="cd11715">
    <property type="entry name" value="THUMP_AdoMetMT"/>
    <property type="match status" value="1"/>
</dbReference>
<dbReference type="FunFam" id="3.30.750.80:FF:000001">
    <property type="entry name" value="Ribosomal RNA large subunit methyltransferase K/L"/>
    <property type="match status" value="1"/>
</dbReference>
<dbReference type="FunFam" id="3.40.50.150:FF:000039">
    <property type="entry name" value="Ribosomal RNA large subunit methyltransferase K/L"/>
    <property type="match status" value="1"/>
</dbReference>
<dbReference type="Gene3D" id="3.30.2130.30">
    <property type="match status" value="1"/>
</dbReference>
<dbReference type="Gene3D" id="3.30.750.80">
    <property type="entry name" value="RNA methyltransferase domain (HRMD) like"/>
    <property type="match status" value="1"/>
</dbReference>
<dbReference type="Gene3D" id="3.40.50.150">
    <property type="entry name" value="Vaccinia Virus protein VP39"/>
    <property type="match status" value="2"/>
</dbReference>
<dbReference type="HAMAP" id="MF_01858">
    <property type="entry name" value="23SrRNA_methyltr_KL"/>
    <property type="match status" value="1"/>
</dbReference>
<dbReference type="InterPro" id="IPR017244">
    <property type="entry name" value="23SrRNA_methyltr_KL"/>
</dbReference>
<dbReference type="InterPro" id="IPR002052">
    <property type="entry name" value="DNA_methylase_N6_adenine_CS"/>
</dbReference>
<dbReference type="InterPro" id="IPR000241">
    <property type="entry name" value="RlmKL-like_Mtase"/>
</dbReference>
<dbReference type="InterPro" id="IPR053943">
    <property type="entry name" value="RlmKL-like_Mtase_CS"/>
</dbReference>
<dbReference type="InterPro" id="IPR054170">
    <property type="entry name" value="RlmL_1st"/>
</dbReference>
<dbReference type="InterPro" id="IPR019614">
    <property type="entry name" value="SAM-dep_methyl-trfase"/>
</dbReference>
<dbReference type="InterPro" id="IPR029063">
    <property type="entry name" value="SAM-dependent_MTases_sf"/>
</dbReference>
<dbReference type="InterPro" id="IPR004114">
    <property type="entry name" value="THUMP_dom"/>
</dbReference>
<dbReference type="NCBIfam" id="NF008748">
    <property type="entry name" value="PRK11783.1"/>
    <property type="match status" value="1"/>
</dbReference>
<dbReference type="PANTHER" id="PTHR47313">
    <property type="entry name" value="RIBOSOMAL RNA LARGE SUBUNIT METHYLTRANSFERASE K/L"/>
    <property type="match status" value="1"/>
</dbReference>
<dbReference type="PANTHER" id="PTHR47313:SF1">
    <property type="entry name" value="RIBOSOMAL RNA LARGE SUBUNIT METHYLTRANSFERASE K_L"/>
    <property type="match status" value="1"/>
</dbReference>
<dbReference type="Pfam" id="PF10672">
    <property type="entry name" value="Methyltrans_SAM"/>
    <property type="match status" value="1"/>
</dbReference>
<dbReference type="Pfam" id="PF22020">
    <property type="entry name" value="RlmL_1st"/>
    <property type="match status" value="1"/>
</dbReference>
<dbReference type="Pfam" id="PF02926">
    <property type="entry name" value="THUMP"/>
    <property type="match status" value="1"/>
</dbReference>
<dbReference type="Pfam" id="PF01170">
    <property type="entry name" value="UPF0020"/>
    <property type="match status" value="1"/>
</dbReference>
<dbReference type="PIRSF" id="PIRSF037618">
    <property type="entry name" value="RNA_Mtase_bacteria_prd"/>
    <property type="match status" value="1"/>
</dbReference>
<dbReference type="SMART" id="SM00981">
    <property type="entry name" value="THUMP"/>
    <property type="match status" value="1"/>
</dbReference>
<dbReference type="SUPFAM" id="SSF53335">
    <property type="entry name" value="S-adenosyl-L-methionine-dependent methyltransferases"/>
    <property type="match status" value="2"/>
</dbReference>
<dbReference type="PROSITE" id="PS51165">
    <property type="entry name" value="THUMP"/>
    <property type="match status" value="1"/>
</dbReference>
<dbReference type="PROSITE" id="PS01261">
    <property type="entry name" value="UPF0020"/>
    <property type="match status" value="1"/>
</dbReference>
<proteinExistence type="inferred from homology"/>
<protein>
    <recommendedName>
        <fullName evidence="1">Ribosomal RNA large subunit methyltransferase K/L</fullName>
    </recommendedName>
    <domain>
        <recommendedName>
            <fullName evidence="1">23S rRNA m2G2445 methyltransferase</fullName>
            <ecNumber evidence="1">2.1.1.173</ecNumber>
        </recommendedName>
        <alternativeName>
            <fullName evidence="1">rRNA (guanine-N(2)-)-methyltransferase RlmL</fullName>
        </alternativeName>
    </domain>
    <domain>
        <recommendedName>
            <fullName evidence="1">23S rRNA m7G2069 methyltransferase</fullName>
            <ecNumber evidence="1">2.1.1.264</ecNumber>
        </recommendedName>
        <alternativeName>
            <fullName evidence="1">rRNA (guanine-N(7)-)-methyltransferase RlmK</fullName>
        </alternativeName>
    </domain>
</protein>
<name>RLMKL_VIBPA</name>
<reference key="1">
    <citation type="journal article" date="2003" name="Lancet">
        <title>Genome sequence of Vibrio parahaemolyticus: a pathogenic mechanism distinct from that of V. cholerae.</title>
        <authorList>
            <person name="Makino K."/>
            <person name="Oshima K."/>
            <person name="Kurokawa K."/>
            <person name="Yokoyama K."/>
            <person name="Uda T."/>
            <person name="Tagomori K."/>
            <person name="Iijima Y."/>
            <person name="Najima M."/>
            <person name="Nakano M."/>
            <person name="Yamashita A."/>
            <person name="Kubota Y."/>
            <person name="Kimura S."/>
            <person name="Yasunaga T."/>
            <person name="Honda T."/>
            <person name="Shinagawa H."/>
            <person name="Hattori M."/>
            <person name="Iida T."/>
        </authorList>
    </citation>
    <scope>NUCLEOTIDE SEQUENCE [LARGE SCALE GENOMIC DNA]</scope>
    <source>
        <strain>RIMD 2210633</strain>
    </source>
</reference>
<feature type="chain" id="PRO_0000366851" description="Ribosomal RNA large subunit methyltransferase K/L">
    <location>
        <begin position="1"/>
        <end position="707"/>
    </location>
</feature>
<feature type="domain" description="THUMP" evidence="1">
    <location>
        <begin position="43"/>
        <end position="154"/>
    </location>
</feature>
<keyword id="KW-0963">Cytoplasm</keyword>
<keyword id="KW-0489">Methyltransferase</keyword>
<keyword id="KW-0694">RNA-binding</keyword>
<keyword id="KW-0698">rRNA processing</keyword>
<keyword id="KW-0949">S-adenosyl-L-methionine</keyword>
<keyword id="KW-0808">Transferase</keyword>
<evidence type="ECO:0000255" key="1">
    <source>
        <dbReference type="HAMAP-Rule" id="MF_01858"/>
    </source>
</evidence>